<comment type="subcellular location">
    <subcellularLocation>
        <location evidence="1">Nucleus</location>
    </subcellularLocation>
</comment>
<proteinExistence type="inferred from homology"/>
<keyword id="KW-0238">DNA-binding</keyword>
<keyword id="KW-0539">Nucleus</keyword>
<keyword id="KW-1185">Reference proteome</keyword>
<keyword id="KW-0804">Transcription</keyword>
<keyword id="KW-0805">Transcription regulation</keyword>
<accession>Q5VV16</accession>
<protein>
    <recommendedName>
        <fullName>Forkhead box protein D4-like 5</fullName>
        <shortName>FOXD4-like 5</shortName>
    </recommendedName>
</protein>
<gene>
    <name type="primary">FOXD4L5</name>
</gene>
<reference key="1">
    <citation type="journal article" date="2004" name="Nature">
        <title>DNA sequence and analysis of human chromosome 9.</title>
        <authorList>
            <person name="Humphray S.J."/>
            <person name="Oliver K."/>
            <person name="Hunt A.R."/>
            <person name="Plumb R.W."/>
            <person name="Loveland J.E."/>
            <person name="Howe K.L."/>
            <person name="Andrews T.D."/>
            <person name="Searle S."/>
            <person name="Hunt S.E."/>
            <person name="Scott C.E."/>
            <person name="Jones M.C."/>
            <person name="Ainscough R."/>
            <person name="Almeida J.P."/>
            <person name="Ambrose K.D."/>
            <person name="Ashwell R.I.S."/>
            <person name="Babbage A.K."/>
            <person name="Babbage S."/>
            <person name="Bagguley C.L."/>
            <person name="Bailey J."/>
            <person name="Banerjee R."/>
            <person name="Barker D.J."/>
            <person name="Barlow K.F."/>
            <person name="Bates K."/>
            <person name="Beasley H."/>
            <person name="Beasley O."/>
            <person name="Bird C.P."/>
            <person name="Bray-Allen S."/>
            <person name="Brown A.J."/>
            <person name="Brown J.Y."/>
            <person name="Burford D."/>
            <person name="Burrill W."/>
            <person name="Burton J."/>
            <person name="Carder C."/>
            <person name="Carter N.P."/>
            <person name="Chapman J.C."/>
            <person name="Chen Y."/>
            <person name="Clarke G."/>
            <person name="Clark S.Y."/>
            <person name="Clee C.M."/>
            <person name="Clegg S."/>
            <person name="Collier R.E."/>
            <person name="Corby N."/>
            <person name="Crosier M."/>
            <person name="Cummings A.T."/>
            <person name="Davies J."/>
            <person name="Dhami P."/>
            <person name="Dunn M."/>
            <person name="Dutta I."/>
            <person name="Dyer L.W."/>
            <person name="Earthrowl M.E."/>
            <person name="Faulkner L."/>
            <person name="Fleming C.J."/>
            <person name="Frankish A."/>
            <person name="Frankland J.A."/>
            <person name="French L."/>
            <person name="Fricker D.G."/>
            <person name="Garner P."/>
            <person name="Garnett J."/>
            <person name="Ghori J."/>
            <person name="Gilbert J.G.R."/>
            <person name="Glison C."/>
            <person name="Grafham D.V."/>
            <person name="Gribble S."/>
            <person name="Griffiths C."/>
            <person name="Griffiths-Jones S."/>
            <person name="Grocock R."/>
            <person name="Guy J."/>
            <person name="Hall R.E."/>
            <person name="Hammond S."/>
            <person name="Harley J.L."/>
            <person name="Harrison E.S.I."/>
            <person name="Hart E.A."/>
            <person name="Heath P.D."/>
            <person name="Henderson C.D."/>
            <person name="Hopkins B.L."/>
            <person name="Howard P.J."/>
            <person name="Howden P.J."/>
            <person name="Huckle E."/>
            <person name="Johnson C."/>
            <person name="Johnson D."/>
            <person name="Joy A.A."/>
            <person name="Kay M."/>
            <person name="Keenan S."/>
            <person name="Kershaw J.K."/>
            <person name="Kimberley A.M."/>
            <person name="King A."/>
            <person name="Knights A."/>
            <person name="Laird G.K."/>
            <person name="Langford C."/>
            <person name="Lawlor S."/>
            <person name="Leongamornlert D.A."/>
            <person name="Leversha M."/>
            <person name="Lloyd C."/>
            <person name="Lloyd D.M."/>
            <person name="Lovell J."/>
            <person name="Martin S."/>
            <person name="Mashreghi-Mohammadi M."/>
            <person name="Matthews L."/>
            <person name="McLaren S."/>
            <person name="McLay K.E."/>
            <person name="McMurray A."/>
            <person name="Milne S."/>
            <person name="Nickerson T."/>
            <person name="Nisbett J."/>
            <person name="Nordsiek G."/>
            <person name="Pearce A.V."/>
            <person name="Peck A.I."/>
            <person name="Porter K.M."/>
            <person name="Pandian R."/>
            <person name="Pelan S."/>
            <person name="Phillimore B."/>
            <person name="Povey S."/>
            <person name="Ramsey Y."/>
            <person name="Rand V."/>
            <person name="Scharfe M."/>
            <person name="Sehra H.K."/>
            <person name="Shownkeen R."/>
            <person name="Sims S.K."/>
            <person name="Skuce C.D."/>
            <person name="Smith M."/>
            <person name="Steward C.A."/>
            <person name="Swarbreck D."/>
            <person name="Sycamore N."/>
            <person name="Tester J."/>
            <person name="Thorpe A."/>
            <person name="Tracey A."/>
            <person name="Tromans A."/>
            <person name="Thomas D.W."/>
            <person name="Wall M."/>
            <person name="Wallis J.M."/>
            <person name="West A.P."/>
            <person name="Whitehead S.L."/>
            <person name="Willey D.L."/>
            <person name="Williams S.A."/>
            <person name="Wilming L."/>
            <person name="Wray P.W."/>
            <person name="Young L."/>
            <person name="Ashurst J.L."/>
            <person name="Coulson A."/>
            <person name="Blocker H."/>
            <person name="Durbin R.M."/>
            <person name="Sulston J.E."/>
            <person name="Hubbard T."/>
            <person name="Jackson M.J."/>
            <person name="Bentley D.R."/>
            <person name="Beck S."/>
            <person name="Rogers J."/>
            <person name="Dunham I."/>
        </authorList>
    </citation>
    <scope>NUCLEOTIDE SEQUENCE [LARGE SCALE GENOMIC DNA]</scope>
</reference>
<sequence>MNLPRAERPRSTPQRSLRDSDGEDGKIDVLGEEEDEDEVEDEEEEARQQFLEQSLQPGLQVARWGGVALPREHIEGGGGPSDPSEFGTKFRAPPRSAAASEDARQPAKPPYSYIALITMAILQNPHKRLTLSGICAFISGRFPYYRRKFPAWQNSIRHNLSLNDCFVKIPREPGHPGKGNYWSLDPASQDMFDNGSFLRRRKRFKRHQLTPGAHLPHPFPLPAAHAALHNPHPGPLLGAPAPPQPVPGAYPNTAPGRCPYALLHPHPLRYLLLSAPVYAGAPKKAEGADLATPAPFPCCSPHLVLSLGRRARVWRRHREADASLSALRVLCKGSGERVQGLRRVCPRPRGATATCSSDHQACCIPKPLPLCCKCPPPLLLGQFCSNSSSIRRTAPTAALPPRARCWAGTCRPRRRC</sequence>
<name>FX4L5_HUMAN</name>
<organism>
    <name type="scientific">Homo sapiens</name>
    <name type="common">Human</name>
    <dbReference type="NCBI Taxonomy" id="9606"/>
    <lineage>
        <taxon>Eukaryota</taxon>
        <taxon>Metazoa</taxon>
        <taxon>Chordata</taxon>
        <taxon>Craniata</taxon>
        <taxon>Vertebrata</taxon>
        <taxon>Euteleostomi</taxon>
        <taxon>Mammalia</taxon>
        <taxon>Eutheria</taxon>
        <taxon>Euarchontoglires</taxon>
        <taxon>Primates</taxon>
        <taxon>Haplorrhini</taxon>
        <taxon>Catarrhini</taxon>
        <taxon>Hominidae</taxon>
        <taxon>Homo</taxon>
    </lineage>
</organism>
<evidence type="ECO:0000255" key="1">
    <source>
        <dbReference type="PROSITE-ProRule" id="PRU00089"/>
    </source>
</evidence>
<evidence type="ECO:0000256" key="2">
    <source>
        <dbReference type="SAM" id="MobiDB-lite"/>
    </source>
</evidence>
<feature type="chain" id="PRO_0000301978" description="Forkhead box protein D4-like 5">
    <location>
        <begin position="1"/>
        <end position="416"/>
    </location>
</feature>
<feature type="DNA-binding region" description="Fork-head" evidence="1">
    <location>
        <begin position="108"/>
        <end position="202"/>
    </location>
</feature>
<feature type="region of interest" description="Disordered" evidence="2">
    <location>
        <begin position="1"/>
        <end position="55"/>
    </location>
</feature>
<feature type="region of interest" description="Disordered" evidence="2">
    <location>
        <begin position="70"/>
        <end position="105"/>
    </location>
</feature>
<feature type="compositionally biased region" description="Basic and acidic residues" evidence="2">
    <location>
        <begin position="1"/>
        <end position="29"/>
    </location>
</feature>
<feature type="compositionally biased region" description="Acidic residues" evidence="2">
    <location>
        <begin position="30"/>
        <end position="45"/>
    </location>
</feature>
<dbReference type="EMBL" id="AL512605">
    <property type="status" value="NOT_ANNOTATED_CDS"/>
    <property type="molecule type" value="Genomic_DNA"/>
</dbReference>
<dbReference type="CCDS" id="CCDS47977.1"/>
<dbReference type="RefSeq" id="NP_001119806.1">
    <property type="nucleotide sequence ID" value="NM_001126334.1"/>
</dbReference>
<dbReference type="SMR" id="Q5VV16"/>
<dbReference type="FunCoup" id="Q5VV16">
    <property type="interactions" value="1"/>
</dbReference>
<dbReference type="STRING" id="9606.ENSP00000366637"/>
<dbReference type="GlyGen" id="Q5VV16">
    <property type="glycosylation" value="1 site"/>
</dbReference>
<dbReference type="BioMuta" id="FOXD4L5"/>
<dbReference type="DMDM" id="74747187"/>
<dbReference type="jPOST" id="Q5VV16"/>
<dbReference type="MassIVE" id="Q5VV16"/>
<dbReference type="PaxDb" id="9606-ENSP00000366637"/>
<dbReference type="PeptideAtlas" id="Q5VV16"/>
<dbReference type="Antibodypedia" id="67846">
    <property type="antibodies" value="23 antibodies from 12 providers"/>
</dbReference>
<dbReference type="DNASU" id="653427"/>
<dbReference type="Ensembl" id="ENST00000377420.1">
    <property type="protein sequence ID" value="ENSP00000366637.1"/>
    <property type="gene ID" value="ENSG00000204779.2"/>
</dbReference>
<dbReference type="GeneID" id="653427"/>
<dbReference type="KEGG" id="hsa:653427"/>
<dbReference type="MANE-Select" id="ENST00000377420.1">
    <property type="protein sequence ID" value="ENSP00000366637.1"/>
    <property type="RefSeq nucleotide sequence ID" value="NM_001126334.1"/>
    <property type="RefSeq protein sequence ID" value="NP_001119806.1"/>
</dbReference>
<dbReference type="UCSC" id="uc010moc.3">
    <property type="organism name" value="human"/>
</dbReference>
<dbReference type="AGR" id="HGNC:18522"/>
<dbReference type="CTD" id="653427"/>
<dbReference type="GeneCards" id="FOXD4L5"/>
<dbReference type="HGNC" id="HGNC:18522">
    <property type="gene designation" value="FOXD4L5"/>
</dbReference>
<dbReference type="HPA" id="ENSG00000204779">
    <property type="expression patterns" value="Not detected"/>
</dbReference>
<dbReference type="neXtProt" id="NX_Q5VV16"/>
<dbReference type="OpenTargets" id="ENSG00000204779"/>
<dbReference type="PharmGKB" id="PA162388804"/>
<dbReference type="VEuPathDB" id="HostDB:ENSG00000204779"/>
<dbReference type="eggNOG" id="KOG2294">
    <property type="taxonomic scope" value="Eukaryota"/>
</dbReference>
<dbReference type="GeneTree" id="ENSGT00940000163353"/>
<dbReference type="HOGENOM" id="CLU_040357_3_1_1"/>
<dbReference type="InParanoid" id="Q5VV16"/>
<dbReference type="OMA" id="LRACCTI"/>
<dbReference type="OrthoDB" id="9537367at2759"/>
<dbReference type="PAN-GO" id="Q5VV16">
    <property type="GO annotations" value="5 GO annotations based on evolutionary models"/>
</dbReference>
<dbReference type="PhylomeDB" id="Q5VV16"/>
<dbReference type="TreeFam" id="TF316127"/>
<dbReference type="PathwayCommons" id="Q5VV16"/>
<dbReference type="BioGRID-ORCS" id="653427">
    <property type="hits" value="44 hits in 705 CRISPR screens"/>
</dbReference>
<dbReference type="GenomeRNAi" id="653427"/>
<dbReference type="Pharos" id="Q5VV16">
    <property type="development level" value="Tdark"/>
</dbReference>
<dbReference type="PRO" id="PR:Q5VV16"/>
<dbReference type="Proteomes" id="UP000005640">
    <property type="component" value="Chromosome 9"/>
</dbReference>
<dbReference type="RNAct" id="Q5VV16">
    <property type="molecule type" value="protein"/>
</dbReference>
<dbReference type="Bgee" id="ENSG00000204779">
    <property type="expression patterns" value="Expressed in male germ line stem cell (sensu Vertebrata) in testis and 51 other cell types or tissues"/>
</dbReference>
<dbReference type="GO" id="GO:0000785">
    <property type="term" value="C:chromatin"/>
    <property type="evidence" value="ECO:0000247"/>
    <property type="project" value="NTNU_SB"/>
</dbReference>
<dbReference type="GO" id="GO:0005634">
    <property type="term" value="C:nucleus"/>
    <property type="evidence" value="ECO:0007669"/>
    <property type="project" value="UniProtKB-SubCell"/>
</dbReference>
<dbReference type="GO" id="GO:0000981">
    <property type="term" value="F:DNA-binding transcription factor activity, RNA polymerase II-specific"/>
    <property type="evidence" value="ECO:0000247"/>
    <property type="project" value="NTNU_SB"/>
</dbReference>
<dbReference type="GO" id="GO:0000978">
    <property type="term" value="F:RNA polymerase II cis-regulatory region sequence-specific DNA binding"/>
    <property type="evidence" value="ECO:0000318"/>
    <property type="project" value="GO_Central"/>
</dbReference>
<dbReference type="GO" id="GO:0009653">
    <property type="term" value="P:anatomical structure morphogenesis"/>
    <property type="evidence" value="ECO:0000318"/>
    <property type="project" value="GO_Central"/>
</dbReference>
<dbReference type="GO" id="GO:0030154">
    <property type="term" value="P:cell differentiation"/>
    <property type="evidence" value="ECO:0000318"/>
    <property type="project" value="GO_Central"/>
</dbReference>
<dbReference type="GO" id="GO:0006357">
    <property type="term" value="P:regulation of transcription by RNA polymerase II"/>
    <property type="evidence" value="ECO:0000318"/>
    <property type="project" value="GO_Central"/>
</dbReference>
<dbReference type="CDD" id="cd20048">
    <property type="entry name" value="FH_FOXD4-like"/>
    <property type="match status" value="1"/>
</dbReference>
<dbReference type="FunFam" id="1.10.10.10:FF:000071">
    <property type="entry name" value="Forkhead box F1"/>
    <property type="match status" value="1"/>
</dbReference>
<dbReference type="Gene3D" id="1.10.10.10">
    <property type="entry name" value="Winged helix-like DNA-binding domain superfamily/Winged helix DNA-binding domain"/>
    <property type="match status" value="1"/>
</dbReference>
<dbReference type="InterPro" id="IPR001766">
    <property type="entry name" value="Fork_head_dom"/>
</dbReference>
<dbReference type="InterPro" id="IPR050211">
    <property type="entry name" value="FOX_domain-containing"/>
</dbReference>
<dbReference type="InterPro" id="IPR018122">
    <property type="entry name" value="TF_fork_head_CS_1"/>
</dbReference>
<dbReference type="InterPro" id="IPR030456">
    <property type="entry name" value="TF_fork_head_CS_2"/>
</dbReference>
<dbReference type="InterPro" id="IPR036388">
    <property type="entry name" value="WH-like_DNA-bd_sf"/>
</dbReference>
<dbReference type="InterPro" id="IPR036390">
    <property type="entry name" value="WH_DNA-bd_sf"/>
</dbReference>
<dbReference type="PANTHER" id="PTHR11829">
    <property type="entry name" value="FORKHEAD BOX PROTEIN"/>
    <property type="match status" value="1"/>
</dbReference>
<dbReference type="PANTHER" id="PTHR11829:SF396">
    <property type="entry name" value="FORKHEAD BOX PROTEIN D4-LIKE 3-RELATED"/>
    <property type="match status" value="1"/>
</dbReference>
<dbReference type="Pfam" id="PF00250">
    <property type="entry name" value="Forkhead"/>
    <property type="match status" value="1"/>
</dbReference>
<dbReference type="PRINTS" id="PR00053">
    <property type="entry name" value="FORKHEAD"/>
</dbReference>
<dbReference type="SMART" id="SM00339">
    <property type="entry name" value="FH"/>
    <property type="match status" value="1"/>
</dbReference>
<dbReference type="SUPFAM" id="SSF46785">
    <property type="entry name" value="Winged helix' DNA-binding domain"/>
    <property type="match status" value="1"/>
</dbReference>
<dbReference type="PROSITE" id="PS00657">
    <property type="entry name" value="FORK_HEAD_1"/>
    <property type="match status" value="1"/>
</dbReference>
<dbReference type="PROSITE" id="PS00658">
    <property type="entry name" value="FORK_HEAD_2"/>
    <property type="match status" value="1"/>
</dbReference>
<dbReference type="PROSITE" id="PS50039">
    <property type="entry name" value="FORK_HEAD_3"/>
    <property type="match status" value="1"/>
</dbReference>